<name>ATPF_SOLUE</name>
<evidence type="ECO:0000255" key="1">
    <source>
        <dbReference type="HAMAP-Rule" id="MF_01398"/>
    </source>
</evidence>
<reference key="1">
    <citation type="journal article" date="2009" name="Appl. Environ. Microbiol.">
        <title>Three genomes from the phylum Acidobacteria provide insight into the lifestyles of these microorganisms in soils.</title>
        <authorList>
            <person name="Ward N.L."/>
            <person name="Challacombe J.F."/>
            <person name="Janssen P.H."/>
            <person name="Henrissat B."/>
            <person name="Coutinho P.M."/>
            <person name="Wu M."/>
            <person name="Xie G."/>
            <person name="Haft D.H."/>
            <person name="Sait M."/>
            <person name="Badger J."/>
            <person name="Barabote R.D."/>
            <person name="Bradley B."/>
            <person name="Brettin T.S."/>
            <person name="Brinkac L.M."/>
            <person name="Bruce D."/>
            <person name="Creasy T."/>
            <person name="Daugherty S.C."/>
            <person name="Davidsen T.M."/>
            <person name="DeBoy R.T."/>
            <person name="Detter J.C."/>
            <person name="Dodson R.J."/>
            <person name="Durkin A.S."/>
            <person name="Ganapathy A."/>
            <person name="Gwinn-Giglio M."/>
            <person name="Han C.S."/>
            <person name="Khouri H."/>
            <person name="Kiss H."/>
            <person name="Kothari S.P."/>
            <person name="Madupu R."/>
            <person name="Nelson K.E."/>
            <person name="Nelson W.C."/>
            <person name="Paulsen I."/>
            <person name="Penn K."/>
            <person name="Ren Q."/>
            <person name="Rosovitz M.J."/>
            <person name="Selengut J.D."/>
            <person name="Shrivastava S."/>
            <person name="Sullivan S.A."/>
            <person name="Tapia R."/>
            <person name="Thompson L.S."/>
            <person name="Watkins K.L."/>
            <person name="Yang Q."/>
            <person name="Yu C."/>
            <person name="Zafar N."/>
            <person name="Zhou L."/>
            <person name="Kuske C.R."/>
        </authorList>
    </citation>
    <scope>NUCLEOTIDE SEQUENCE [LARGE SCALE GENOMIC DNA]</scope>
    <source>
        <strain>Ellin6076</strain>
    </source>
</reference>
<proteinExistence type="inferred from homology"/>
<comment type="function">
    <text evidence="1">F(1)F(0) ATP synthase produces ATP from ADP in the presence of a proton or sodium gradient. F-type ATPases consist of two structural domains, F(1) containing the extramembraneous catalytic core and F(0) containing the membrane proton channel, linked together by a central stalk and a peripheral stalk. During catalysis, ATP synthesis in the catalytic domain of F(1) is coupled via a rotary mechanism of the central stalk subunits to proton translocation.</text>
</comment>
<comment type="function">
    <text evidence="1">Component of the F(0) channel, it forms part of the peripheral stalk, linking F(1) to F(0).</text>
</comment>
<comment type="subunit">
    <text evidence="1">F-type ATPases have 2 components, F(1) - the catalytic core - and F(0) - the membrane proton channel. F(1) has five subunits: alpha(3), beta(3), gamma(1), delta(1), epsilon(1). F(0) has three main subunits: a(1), b(2) and c(10-14). The alpha and beta chains form an alternating ring which encloses part of the gamma chain. F(1) is attached to F(0) by a central stalk formed by the gamma and epsilon chains, while a peripheral stalk is formed by the delta and b chains.</text>
</comment>
<comment type="subcellular location">
    <subcellularLocation>
        <location evidence="1">Cell inner membrane</location>
        <topology evidence="1">Single-pass membrane protein</topology>
    </subcellularLocation>
</comment>
<comment type="similarity">
    <text evidence="1">Belongs to the ATPase B chain family.</text>
</comment>
<gene>
    <name evidence="1" type="primary">atpF</name>
    <name type="ordered locus">Acid_0461</name>
</gene>
<dbReference type="EMBL" id="CP000473">
    <property type="protein sequence ID" value="ABJ81471.1"/>
    <property type="molecule type" value="Genomic_DNA"/>
</dbReference>
<dbReference type="SMR" id="Q02BU5"/>
<dbReference type="STRING" id="234267.Acid_0461"/>
<dbReference type="KEGG" id="sus:Acid_0461"/>
<dbReference type="eggNOG" id="COG0711">
    <property type="taxonomic scope" value="Bacteria"/>
</dbReference>
<dbReference type="HOGENOM" id="CLU_1377346_0_0_0"/>
<dbReference type="InParanoid" id="Q02BU5"/>
<dbReference type="OrthoDB" id="129506at2"/>
<dbReference type="GO" id="GO:0005886">
    <property type="term" value="C:plasma membrane"/>
    <property type="evidence" value="ECO:0007669"/>
    <property type="project" value="UniProtKB-SubCell"/>
</dbReference>
<dbReference type="GO" id="GO:0045259">
    <property type="term" value="C:proton-transporting ATP synthase complex"/>
    <property type="evidence" value="ECO:0007669"/>
    <property type="project" value="UniProtKB-KW"/>
</dbReference>
<dbReference type="GO" id="GO:0046933">
    <property type="term" value="F:proton-transporting ATP synthase activity, rotational mechanism"/>
    <property type="evidence" value="ECO:0007669"/>
    <property type="project" value="UniProtKB-UniRule"/>
</dbReference>
<dbReference type="GO" id="GO:0046961">
    <property type="term" value="F:proton-transporting ATPase activity, rotational mechanism"/>
    <property type="evidence" value="ECO:0007669"/>
    <property type="project" value="TreeGrafter"/>
</dbReference>
<dbReference type="CDD" id="cd06503">
    <property type="entry name" value="ATP-synt_Fo_b"/>
    <property type="match status" value="1"/>
</dbReference>
<dbReference type="HAMAP" id="MF_01398">
    <property type="entry name" value="ATP_synth_b_bprime"/>
    <property type="match status" value="1"/>
</dbReference>
<dbReference type="InterPro" id="IPR002146">
    <property type="entry name" value="ATP_synth_b/b'su_bac/chlpt"/>
</dbReference>
<dbReference type="InterPro" id="IPR050059">
    <property type="entry name" value="ATP_synthase_B_chain"/>
</dbReference>
<dbReference type="PANTHER" id="PTHR33445:SF1">
    <property type="entry name" value="ATP SYNTHASE SUBUNIT B"/>
    <property type="match status" value="1"/>
</dbReference>
<dbReference type="PANTHER" id="PTHR33445">
    <property type="entry name" value="ATP SYNTHASE SUBUNIT B', CHLOROPLASTIC"/>
    <property type="match status" value="1"/>
</dbReference>
<dbReference type="Pfam" id="PF00430">
    <property type="entry name" value="ATP-synt_B"/>
    <property type="match status" value="1"/>
</dbReference>
<accession>Q02BU5</accession>
<organism>
    <name type="scientific">Solibacter usitatus (strain Ellin6076)</name>
    <dbReference type="NCBI Taxonomy" id="234267"/>
    <lineage>
        <taxon>Bacteria</taxon>
        <taxon>Pseudomonadati</taxon>
        <taxon>Acidobacteriota</taxon>
        <taxon>Terriglobia</taxon>
        <taxon>Bryobacterales</taxon>
        <taxon>Solibacteraceae</taxon>
        <taxon>Candidatus Solibacter</taxon>
    </lineage>
</organism>
<protein>
    <recommendedName>
        <fullName evidence="1">ATP synthase subunit b</fullName>
    </recommendedName>
    <alternativeName>
        <fullName evidence="1">ATP synthase F(0) sector subunit b</fullName>
    </alternativeName>
    <alternativeName>
        <fullName evidence="1">ATPase subunit I</fullName>
    </alternativeName>
    <alternativeName>
        <fullName evidence="1">F-type ATPase subunit b</fullName>
        <shortName evidence="1">F-ATPase subunit b</shortName>
    </alternativeName>
</protein>
<keyword id="KW-0066">ATP synthesis</keyword>
<keyword id="KW-0997">Cell inner membrane</keyword>
<keyword id="KW-1003">Cell membrane</keyword>
<keyword id="KW-0138">CF(0)</keyword>
<keyword id="KW-0375">Hydrogen ion transport</keyword>
<keyword id="KW-0406">Ion transport</keyword>
<keyword id="KW-0472">Membrane</keyword>
<keyword id="KW-0812">Transmembrane</keyword>
<keyword id="KW-1133">Transmembrane helix</keyword>
<keyword id="KW-0813">Transport</keyword>
<feature type="chain" id="PRO_5000003223" description="ATP synthase subunit b">
    <location>
        <begin position="1"/>
        <end position="198"/>
    </location>
</feature>
<feature type="transmembrane region" description="Helical" evidence="1">
    <location>
        <begin position="49"/>
        <end position="67"/>
    </location>
</feature>
<sequence length="198" mass="21533">MRRLAVYLAIAVGLFAQAPKEGARESLAEKADEAGNKAHAAEEEGSMDIWKWANFLILAGGLGYLVGKNAGPFFAARSAGIRKDMENSLAQQKDAEARAADVDRRLANMEADIAALRGEGERAARAEAERMEQHTAAEIAKIQQHSEQEIASAGKAARMDLKRYAAELAVELAEQKVRARMTPETQDALVQGFVRNLK</sequence>